<gene>
    <name evidence="1" type="primary">rplO</name>
    <name type="ordered locus">TTE2273</name>
</gene>
<comment type="function">
    <text evidence="1">Binds to the 23S rRNA.</text>
</comment>
<comment type="subunit">
    <text evidence="1">Part of the 50S ribosomal subunit.</text>
</comment>
<comment type="similarity">
    <text evidence="1">Belongs to the universal ribosomal protein uL15 family.</text>
</comment>
<reference key="1">
    <citation type="journal article" date="2002" name="Genome Res.">
        <title>A complete sequence of the T. tengcongensis genome.</title>
        <authorList>
            <person name="Bao Q."/>
            <person name="Tian Y."/>
            <person name="Li W."/>
            <person name="Xu Z."/>
            <person name="Xuan Z."/>
            <person name="Hu S."/>
            <person name="Dong W."/>
            <person name="Yang J."/>
            <person name="Chen Y."/>
            <person name="Xue Y."/>
            <person name="Xu Y."/>
            <person name="Lai X."/>
            <person name="Huang L."/>
            <person name="Dong X."/>
            <person name="Ma Y."/>
            <person name="Ling L."/>
            <person name="Tan H."/>
            <person name="Chen R."/>
            <person name="Wang J."/>
            <person name="Yu J."/>
            <person name="Yang H."/>
        </authorList>
    </citation>
    <scope>NUCLEOTIDE SEQUENCE [LARGE SCALE GENOMIC DNA]</scope>
    <source>
        <strain>DSM 15242 / JCM 11007 / NBRC 100824 / MB4</strain>
    </source>
</reference>
<sequence>MRLHDLKPAEGSTKKKKRVGRGIGSGHGKTSGRGHKGQNARSGGGVRPGFEGGQMPLTRRIPKRGFTNIFKKEYAIVNVGTLEERFEDGAEITPEVLIEKGIIKDVKDGVKILGDGELTKKLTVKAHKFSQSAVEKIQAVGGKAEVI</sequence>
<accession>Q8R7X2</accession>
<protein>
    <recommendedName>
        <fullName evidence="1">Large ribosomal subunit protein uL15</fullName>
    </recommendedName>
    <alternativeName>
        <fullName evidence="3">50S ribosomal protein L15</fullName>
    </alternativeName>
</protein>
<feature type="chain" id="PRO_0000104841" description="Large ribosomal subunit protein uL15">
    <location>
        <begin position="1"/>
        <end position="147"/>
    </location>
</feature>
<feature type="region of interest" description="Disordered" evidence="2">
    <location>
        <begin position="1"/>
        <end position="58"/>
    </location>
</feature>
<feature type="compositionally biased region" description="Gly residues" evidence="2">
    <location>
        <begin position="42"/>
        <end position="52"/>
    </location>
</feature>
<name>RL15_CALS4</name>
<organism>
    <name type="scientific">Caldanaerobacter subterraneus subsp. tengcongensis (strain DSM 15242 / JCM 11007 / NBRC 100824 / MB4)</name>
    <name type="common">Thermoanaerobacter tengcongensis</name>
    <dbReference type="NCBI Taxonomy" id="273068"/>
    <lineage>
        <taxon>Bacteria</taxon>
        <taxon>Bacillati</taxon>
        <taxon>Bacillota</taxon>
        <taxon>Clostridia</taxon>
        <taxon>Thermoanaerobacterales</taxon>
        <taxon>Thermoanaerobacteraceae</taxon>
        <taxon>Caldanaerobacter</taxon>
    </lineage>
</organism>
<evidence type="ECO:0000255" key="1">
    <source>
        <dbReference type="HAMAP-Rule" id="MF_01341"/>
    </source>
</evidence>
<evidence type="ECO:0000256" key="2">
    <source>
        <dbReference type="SAM" id="MobiDB-lite"/>
    </source>
</evidence>
<evidence type="ECO:0000305" key="3"/>
<keyword id="KW-1185">Reference proteome</keyword>
<keyword id="KW-0687">Ribonucleoprotein</keyword>
<keyword id="KW-0689">Ribosomal protein</keyword>
<keyword id="KW-0694">RNA-binding</keyword>
<keyword id="KW-0699">rRNA-binding</keyword>
<dbReference type="EMBL" id="AE008691">
    <property type="protein sequence ID" value="AAM25417.1"/>
    <property type="molecule type" value="Genomic_DNA"/>
</dbReference>
<dbReference type="RefSeq" id="WP_011026320.1">
    <property type="nucleotide sequence ID" value="NC_003869.1"/>
</dbReference>
<dbReference type="SMR" id="Q8R7X2"/>
<dbReference type="STRING" id="273068.TTE2273"/>
<dbReference type="KEGG" id="tte:TTE2273"/>
<dbReference type="eggNOG" id="COG0200">
    <property type="taxonomic scope" value="Bacteria"/>
</dbReference>
<dbReference type="HOGENOM" id="CLU_055188_4_2_9"/>
<dbReference type="OrthoDB" id="9810293at2"/>
<dbReference type="Proteomes" id="UP000000555">
    <property type="component" value="Chromosome"/>
</dbReference>
<dbReference type="GO" id="GO:0022625">
    <property type="term" value="C:cytosolic large ribosomal subunit"/>
    <property type="evidence" value="ECO:0007669"/>
    <property type="project" value="TreeGrafter"/>
</dbReference>
<dbReference type="GO" id="GO:0019843">
    <property type="term" value="F:rRNA binding"/>
    <property type="evidence" value="ECO:0007669"/>
    <property type="project" value="UniProtKB-UniRule"/>
</dbReference>
<dbReference type="GO" id="GO:0003735">
    <property type="term" value="F:structural constituent of ribosome"/>
    <property type="evidence" value="ECO:0007669"/>
    <property type="project" value="InterPro"/>
</dbReference>
<dbReference type="GO" id="GO:0006412">
    <property type="term" value="P:translation"/>
    <property type="evidence" value="ECO:0007669"/>
    <property type="project" value="UniProtKB-UniRule"/>
</dbReference>
<dbReference type="FunFam" id="3.100.10.10:FF:000005">
    <property type="entry name" value="50S ribosomal protein L15"/>
    <property type="match status" value="1"/>
</dbReference>
<dbReference type="Gene3D" id="3.100.10.10">
    <property type="match status" value="1"/>
</dbReference>
<dbReference type="HAMAP" id="MF_01341">
    <property type="entry name" value="Ribosomal_uL15"/>
    <property type="match status" value="1"/>
</dbReference>
<dbReference type="InterPro" id="IPR030878">
    <property type="entry name" value="Ribosomal_uL15"/>
</dbReference>
<dbReference type="InterPro" id="IPR021131">
    <property type="entry name" value="Ribosomal_uL15/eL18"/>
</dbReference>
<dbReference type="InterPro" id="IPR036227">
    <property type="entry name" value="Ribosomal_uL15/eL18_sf"/>
</dbReference>
<dbReference type="InterPro" id="IPR005749">
    <property type="entry name" value="Ribosomal_uL15_bac-type"/>
</dbReference>
<dbReference type="InterPro" id="IPR001196">
    <property type="entry name" value="Ribosomal_uL15_CS"/>
</dbReference>
<dbReference type="NCBIfam" id="TIGR01071">
    <property type="entry name" value="rplO_bact"/>
    <property type="match status" value="1"/>
</dbReference>
<dbReference type="PANTHER" id="PTHR12934">
    <property type="entry name" value="50S RIBOSOMAL PROTEIN L15"/>
    <property type="match status" value="1"/>
</dbReference>
<dbReference type="PANTHER" id="PTHR12934:SF11">
    <property type="entry name" value="LARGE RIBOSOMAL SUBUNIT PROTEIN UL15M"/>
    <property type="match status" value="1"/>
</dbReference>
<dbReference type="Pfam" id="PF00828">
    <property type="entry name" value="Ribosomal_L27A"/>
    <property type="match status" value="1"/>
</dbReference>
<dbReference type="SUPFAM" id="SSF52080">
    <property type="entry name" value="Ribosomal proteins L15p and L18e"/>
    <property type="match status" value="1"/>
</dbReference>
<dbReference type="PROSITE" id="PS00475">
    <property type="entry name" value="RIBOSOMAL_L15"/>
    <property type="match status" value="1"/>
</dbReference>
<proteinExistence type="inferred from homology"/>